<proteinExistence type="inferred from homology"/>
<feature type="chain" id="PRO_1000053388" description="Phosphatidylglycerol--prolipoprotein diacylglyceryl transferase">
    <location>
        <begin position="1"/>
        <end position="271"/>
    </location>
</feature>
<feature type="transmembrane region" description="Helical" evidence="1">
    <location>
        <begin position="18"/>
        <end position="38"/>
    </location>
</feature>
<feature type="transmembrane region" description="Helical" evidence="1">
    <location>
        <begin position="51"/>
        <end position="71"/>
    </location>
</feature>
<feature type="transmembrane region" description="Helical" evidence="1">
    <location>
        <begin position="89"/>
        <end position="109"/>
    </location>
</feature>
<feature type="transmembrane region" description="Helical" evidence="1">
    <location>
        <begin position="115"/>
        <end position="135"/>
    </location>
</feature>
<feature type="transmembrane region" description="Helical" evidence="1">
    <location>
        <begin position="177"/>
        <end position="197"/>
    </location>
</feature>
<feature type="transmembrane region" description="Helical" evidence="1">
    <location>
        <begin position="205"/>
        <end position="225"/>
    </location>
</feature>
<feature type="transmembrane region" description="Helical" evidence="1">
    <location>
        <begin position="236"/>
        <end position="256"/>
    </location>
</feature>
<feature type="binding site" evidence="1">
    <location>
        <position position="137"/>
    </location>
    <ligand>
        <name>a 1,2-diacyl-sn-glycero-3-phospho-(1'-sn-glycerol)</name>
        <dbReference type="ChEBI" id="CHEBI:64716"/>
    </ligand>
</feature>
<organism>
    <name type="scientific">Bacillus velezensis (strain DSM 23117 / BGSC 10A6 / LMG 26770 / FZB42)</name>
    <name type="common">Bacillus amyloliquefaciens subsp. plantarum</name>
    <dbReference type="NCBI Taxonomy" id="326423"/>
    <lineage>
        <taxon>Bacteria</taxon>
        <taxon>Bacillati</taxon>
        <taxon>Bacillota</taxon>
        <taxon>Bacilli</taxon>
        <taxon>Bacillales</taxon>
        <taxon>Bacillaceae</taxon>
        <taxon>Bacillus</taxon>
        <taxon>Bacillus amyloliquefaciens group</taxon>
    </lineage>
</organism>
<name>LGT_BACVZ</name>
<dbReference type="EC" id="2.5.1.145" evidence="1"/>
<dbReference type="EMBL" id="CP000560">
    <property type="protein sequence ID" value="ABS75548.1"/>
    <property type="molecule type" value="Genomic_DNA"/>
</dbReference>
<dbReference type="RefSeq" id="WP_012118551.1">
    <property type="nucleotide sequence ID" value="NC_009725.2"/>
</dbReference>
<dbReference type="SMR" id="A7Z972"/>
<dbReference type="GeneID" id="93082363"/>
<dbReference type="KEGG" id="bay:RBAM_032180"/>
<dbReference type="HOGENOM" id="CLU_013386_1_2_9"/>
<dbReference type="UniPathway" id="UPA00664"/>
<dbReference type="Proteomes" id="UP000001120">
    <property type="component" value="Chromosome"/>
</dbReference>
<dbReference type="GO" id="GO:0005886">
    <property type="term" value="C:plasma membrane"/>
    <property type="evidence" value="ECO:0007669"/>
    <property type="project" value="UniProtKB-SubCell"/>
</dbReference>
<dbReference type="GO" id="GO:0008961">
    <property type="term" value="F:phosphatidylglycerol-prolipoprotein diacylglyceryl transferase activity"/>
    <property type="evidence" value="ECO:0007669"/>
    <property type="project" value="UniProtKB-UniRule"/>
</dbReference>
<dbReference type="GO" id="GO:0042158">
    <property type="term" value="P:lipoprotein biosynthetic process"/>
    <property type="evidence" value="ECO:0007669"/>
    <property type="project" value="UniProtKB-UniRule"/>
</dbReference>
<dbReference type="HAMAP" id="MF_01147">
    <property type="entry name" value="Lgt"/>
    <property type="match status" value="1"/>
</dbReference>
<dbReference type="InterPro" id="IPR001640">
    <property type="entry name" value="Lgt"/>
</dbReference>
<dbReference type="NCBIfam" id="TIGR00544">
    <property type="entry name" value="lgt"/>
    <property type="match status" value="1"/>
</dbReference>
<dbReference type="PANTHER" id="PTHR30589:SF0">
    <property type="entry name" value="PHOSPHATIDYLGLYCEROL--PROLIPOPROTEIN DIACYLGLYCERYL TRANSFERASE"/>
    <property type="match status" value="1"/>
</dbReference>
<dbReference type="PANTHER" id="PTHR30589">
    <property type="entry name" value="PROLIPOPROTEIN DIACYLGLYCERYL TRANSFERASE"/>
    <property type="match status" value="1"/>
</dbReference>
<dbReference type="Pfam" id="PF01790">
    <property type="entry name" value="LGT"/>
    <property type="match status" value="1"/>
</dbReference>
<dbReference type="PROSITE" id="PS01311">
    <property type="entry name" value="LGT"/>
    <property type="match status" value="1"/>
</dbReference>
<protein>
    <recommendedName>
        <fullName evidence="1">Phosphatidylglycerol--prolipoprotein diacylglyceryl transferase</fullName>
        <ecNumber evidence="1">2.5.1.145</ecNumber>
    </recommendedName>
</protein>
<keyword id="KW-1003">Cell membrane</keyword>
<keyword id="KW-0472">Membrane</keyword>
<keyword id="KW-0808">Transferase</keyword>
<keyword id="KW-0812">Transmembrane</keyword>
<keyword id="KW-1133">Transmembrane helix</keyword>
<evidence type="ECO:0000255" key="1">
    <source>
        <dbReference type="HAMAP-Rule" id="MF_01147"/>
    </source>
</evidence>
<comment type="function">
    <text evidence="1">Catalyzes the transfer of the diacylglyceryl group from phosphatidylglycerol to the sulfhydryl group of the N-terminal cysteine of a prolipoprotein, the first step in the formation of mature lipoproteins.</text>
</comment>
<comment type="catalytic activity">
    <reaction evidence="1">
        <text>L-cysteinyl-[prolipoprotein] + a 1,2-diacyl-sn-glycero-3-phospho-(1'-sn-glycerol) = an S-1,2-diacyl-sn-glyceryl-L-cysteinyl-[prolipoprotein] + sn-glycerol 1-phosphate + H(+)</text>
        <dbReference type="Rhea" id="RHEA:56712"/>
        <dbReference type="Rhea" id="RHEA-COMP:14679"/>
        <dbReference type="Rhea" id="RHEA-COMP:14680"/>
        <dbReference type="ChEBI" id="CHEBI:15378"/>
        <dbReference type="ChEBI" id="CHEBI:29950"/>
        <dbReference type="ChEBI" id="CHEBI:57685"/>
        <dbReference type="ChEBI" id="CHEBI:64716"/>
        <dbReference type="ChEBI" id="CHEBI:140658"/>
        <dbReference type="EC" id="2.5.1.145"/>
    </reaction>
</comment>
<comment type="pathway">
    <text evidence="1">Protein modification; lipoprotein biosynthesis (diacylglyceryl transfer).</text>
</comment>
<comment type="subcellular location">
    <subcellularLocation>
        <location evidence="1">Cell membrane</location>
        <topology evidence="1">Multi-pass membrane protein</topology>
    </subcellularLocation>
</comment>
<comment type="similarity">
    <text evidence="1">Belongs to the Lgt family.</text>
</comment>
<accession>A7Z972</accession>
<sequence length="271" mass="30668">MNEAGTPINPIAFQLGPLSVHWYGIIIGAGALLGLWMAMRESEKRGLKKDIFIDLVLFAIPIAIICARAYYVLFEWSYYSEHPGEIIKIWKGGIAIHGGLIGAIATGIVFSKVRGISFWKLADIAAPSILLGQAIGRWGNFINQEAHGEAVSRSFLESLHLPDFIINQMYIDGQYYHPTFLYESLWSFAGVVILLLLRRVNLRRGNLFLTYVIWYSIGRYFIEGMRTDSLMLTSQLRIAQVISIVLIVLAIILMIFRRMKGYADKRYADTD</sequence>
<gene>
    <name evidence="1" type="primary">lgt</name>
    <name type="ordered locus">RBAM_032180</name>
</gene>
<reference key="1">
    <citation type="journal article" date="2007" name="Nat. Biotechnol.">
        <title>Comparative analysis of the complete genome sequence of the plant growth-promoting bacterium Bacillus amyloliquefaciens FZB42.</title>
        <authorList>
            <person name="Chen X.H."/>
            <person name="Koumoutsi A."/>
            <person name="Scholz R."/>
            <person name="Eisenreich A."/>
            <person name="Schneider K."/>
            <person name="Heinemeyer I."/>
            <person name="Morgenstern B."/>
            <person name="Voss B."/>
            <person name="Hess W.R."/>
            <person name="Reva O."/>
            <person name="Junge H."/>
            <person name="Voigt B."/>
            <person name="Jungblut P.R."/>
            <person name="Vater J."/>
            <person name="Suessmuth R."/>
            <person name="Liesegang H."/>
            <person name="Strittmatter A."/>
            <person name="Gottschalk G."/>
            <person name="Borriss R."/>
        </authorList>
    </citation>
    <scope>NUCLEOTIDE SEQUENCE [LARGE SCALE GENOMIC DNA]</scope>
    <source>
        <strain>DSM 23117 / BGSC 10A6 / LMG 26770 / FZB42</strain>
    </source>
</reference>